<proteinExistence type="inferred from homology"/>
<keyword id="KW-0342">GTP-binding</keyword>
<keyword id="KW-0378">Hydrolase</keyword>
<keyword id="KW-0479">Metal-binding</keyword>
<keyword id="KW-0547">Nucleotide-binding</keyword>
<keyword id="KW-0686">Riboflavin biosynthesis</keyword>
<keyword id="KW-0862">Zinc</keyword>
<feature type="chain" id="PRO_1000077255" description="GTP cyclohydrolase-2">
    <location>
        <begin position="1"/>
        <end position="196"/>
    </location>
</feature>
<feature type="active site" description="Proton acceptor" evidence="1">
    <location>
        <position position="126"/>
    </location>
</feature>
<feature type="active site" description="Nucleophile" evidence="1">
    <location>
        <position position="128"/>
    </location>
</feature>
<feature type="binding site" evidence="1">
    <location>
        <begin position="49"/>
        <end position="53"/>
    </location>
    <ligand>
        <name>GTP</name>
        <dbReference type="ChEBI" id="CHEBI:37565"/>
    </ligand>
</feature>
<feature type="binding site" evidence="1">
    <location>
        <position position="54"/>
    </location>
    <ligand>
        <name>Zn(2+)</name>
        <dbReference type="ChEBI" id="CHEBI:29105"/>
        <note>catalytic</note>
    </ligand>
</feature>
<feature type="binding site" evidence="1">
    <location>
        <position position="65"/>
    </location>
    <ligand>
        <name>Zn(2+)</name>
        <dbReference type="ChEBI" id="CHEBI:29105"/>
        <note>catalytic</note>
    </ligand>
</feature>
<feature type="binding site" evidence="1">
    <location>
        <position position="67"/>
    </location>
    <ligand>
        <name>Zn(2+)</name>
        <dbReference type="ChEBI" id="CHEBI:29105"/>
        <note>catalytic</note>
    </ligand>
</feature>
<feature type="binding site" evidence="1">
    <location>
        <position position="70"/>
    </location>
    <ligand>
        <name>GTP</name>
        <dbReference type="ChEBI" id="CHEBI:37565"/>
    </ligand>
</feature>
<feature type="binding site" evidence="1">
    <location>
        <begin position="92"/>
        <end position="94"/>
    </location>
    <ligand>
        <name>GTP</name>
        <dbReference type="ChEBI" id="CHEBI:37565"/>
    </ligand>
</feature>
<feature type="binding site" evidence="1">
    <location>
        <position position="114"/>
    </location>
    <ligand>
        <name>GTP</name>
        <dbReference type="ChEBI" id="CHEBI:37565"/>
    </ligand>
</feature>
<feature type="binding site" evidence="1">
    <location>
        <position position="149"/>
    </location>
    <ligand>
        <name>GTP</name>
        <dbReference type="ChEBI" id="CHEBI:37565"/>
    </ligand>
</feature>
<feature type="binding site" evidence="1">
    <location>
        <position position="154"/>
    </location>
    <ligand>
        <name>GTP</name>
        <dbReference type="ChEBI" id="CHEBI:37565"/>
    </ligand>
</feature>
<dbReference type="EC" id="3.5.4.25" evidence="1"/>
<dbReference type="EMBL" id="CP000946">
    <property type="protein sequence ID" value="ACA77984.1"/>
    <property type="molecule type" value="Genomic_DNA"/>
</dbReference>
<dbReference type="RefSeq" id="WP_001176295.1">
    <property type="nucleotide sequence ID" value="NZ_MTFT01000016.1"/>
</dbReference>
<dbReference type="SMR" id="B1ITH7"/>
<dbReference type="GeneID" id="86946614"/>
<dbReference type="KEGG" id="ecl:EcolC_2349"/>
<dbReference type="HOGENOM" id="CLU_020273_2_1_6"/>
<dbReference type="UniPathway" id="UPA00275">
    <property type="reaction ID" value="UER00400"/>
</dbReference>
<dbReference type="GO" id="GO:0005829">
    <property type="term" value="C:cytosol"/>
    <property type="evidence" value="ECO:0007669"/>
    <property type="project" value="TreeGrafter"/>
</dbReference>
<dbReference type="GO" id="GO:0005525">
    <property type="term" value="F:GTP binding"/>
    <property type="evidence" value="ECO:0007669"/>
    <property type="project" value="UniProtKB-KW"/>
</dbReference>
<dbReference type="GO" id="GO:0003935">
    <property type="term" value="F:GTP cyclohydrolase II activity"/>
    <property type="evidence" value="ECO:0007669"/>
    <property type="project" value="UniProtKB-UniRule"/>
</dbReference>
<dbReference type="GO" id="GO:0008270">
    <property type="term" value="F:zinc ion binding"/>
    <property type="evidence" value="ECO:0007669"/>
    <property type="project" value="UniProtKB-UniRule"/>
</dbReference>
<dbReference type="GO" id="GO:0009231">
    <property type="term" value="P:riboflavin biosynthetic process"/>
    <property type="evidence" value="ECO:0007669"/>
    <property type="project" value="UniProtKB-UniRule"/>
</dbReference>
<dbReference type="CDD" id="cd00641">
    <property type="entry name" value="GTP_cyclohydro2"/>
    <property type="match status" value="1"/>
</dbReference>
<dbReference type="FunFam" id="3.40.50.10990:FF:000002">
    <property type="entry name" value="GTP cyclohydrolase-2"/>
    <property type="match status" value="1"/>
</dbReference>
<dbReference type="Gene3D" id="3.40.50.10990">
    <property type="entry name" value="GTP cyclohydrolase II"/>
    <property type="match status" value="1"/>
</dbReference>
<dbReference type="HAMAP" id="MF_00179">
    <property type="entry name" value="RibA"/>
    <property type="match status" value="1"/>
</dbReference>
<dbReference type="InterPro" id="IPR032677">
    <property type="entry name" value="GTP_cyclohydro_II"/>
</dbReference>
<dbReference type="InterPro" id="IPR000926">
    <property type="entry name" value="RibA"/>
</dbReference>
<dbReference type="InterPro" id="IPR036144">
    <property type="entry name" value="RibA-like_sf"/>
</dbReference>
<dbReference type="NCBIfam" id="NF001591">
    <property type="entry name" value="PRK00393.1"/>
    <property type="match status" value="1"/>
</dbReference>
<dbReference type="NCBIfam" id="TIGR00505">
    <property type="entry name" value="ribA"/>
    <property type="match status" value="1"/>
</dbReference>
<dbReference type="PANTHER" id="PTHR21327:SF18">
    <property type="entry name" value="3,4-DIHYDROXY-2-BUTANONE 4-PHOSPHATE SYNTHASE"/>
    <property type="match status" value="1"/>
</dbReference>
<dbReference type="PANTHER" id="PTHR21327">
    <property type="entry name" value="GTP CYCLOHYDROLASE II-RELATED"/>
    <property type="match status" value="1"/>
</dbReference>
<dbReference type="Pfam" id="PF00925">
    <property type="entry name" value="GTP_cyclohydro2"/>
    <property type="match status" value="1"/>
</dbReference>
<dbReference type="SUPFAM" id="SSF142695">
    <property type="entry name" value="RibA-like"/>
    <property type="match status" value="1"/>
</dbReference>
<evidence type="ECO:0000255" key="1">
    <source>
        <dbReference type="HAMAP-Rule" id="MF_00179"/>
    </source>
</evidence>
<accession>B1ITH7</accession>
<organism>
    <name type="scientific">Escherichia coli (strain ATCC 8739 / DSM 1576 / NBRC 3972 / NCIMB 8545 / WDCM 00012 / Crooks)</name>
    <dbReference type="NCBI Taxonomy" id="481805"/>
    <lineage>
        <taxon>Bacteria</taxon>
        <taxon>Pseudomonadati</taxon>
        <taxon>Pseudomonadota</taxon>
        <taxon>Gammaproteobacteria</taxon>
        <taxon>Enterobacterales</taxon>
        <taxon>Enterobacteriaceae</taxon>
        <taxon>Escherichia</taxon>
    </lineage>
</organism>
<protein>
    <recommendedName>
        <fullName evidence="1">GTP cyclohydrolase-2</fullName>
        <ecNumber evidence="1">3.5.4.25</ecNumber>
    </recommendedName>
    <alternativeName>
        <fullName evidence="1">GTP cyclohydrolase II</fullName>
    </alternativeName>
</protein>
<comment type="function">
    <text evidence="1">Catalyzes the conversion of GTP to 2,5-diamino-6-ribosylamino-4(3H)-pyrimidinone 5'-phosphate (DARP), formate and pyrophosphate.</text>
</comment>
<comment type="catalytic activity">
    <reaction evidence="1">
        <text>GTP + 4 H2O = 2,5-diamino-6-hydroxy-4-(5-phosphoribosylamino)-pyrimidine + formate + 2 phosphate + 3 H(+)</text>
        <dbReference type="Rhea" id="RHEA:23704"/>
        <dbReference type="ChEBI" id="CHEBI:15377"/>
        <dbReference type="ChEBI" id="CHEBI:15378"/>
        <dbReference type="ChEBI" id="CHEBI:15740"/>
        <dbReference type="ChEBI" id="CHEBI:37565"/>
        <dbReference type="ChEBI" id="CHEBI:43474"/>
        <dbReference type="ChEBI" id="CHEBI:58614"/>
        <dbReference type="EC" id="3.5.4.25"/>
    </reaction>
</comment>
<comment type="cofactor">
    <cofactor evidence="1">
        <name>Zn(2+)</name>
        <dbReference type="ChEBI" id="CHEBI:29105"/>
    </cofactor>
    <text evidence="1">Binds 1 zinc ion per subunit.</text>
</comment>
<comment type="pathway">
    <text evidence="1">Cofactor biosynthesis; riboflavin biosynthesis; 5-amino-6-(D-ribitylamino)uracil from GTP: step 1/4.</text>
</comment>
<comment type="subunit">
    <text evidence="1">Homodimer.</text>
</comment>
<comment type="similarity">
    <text evidence="1">Belongs to the GTP cyclohydrolase II family.</text>
</comment>
<gene>
    <name evidence="1" type="primary">ribA</name>
    <name type="ordered locus">EcolC_2349</name>
</gene>
<sequence>MQLKRVAEAKLPTPWGDFLMVGFEELATGHDHVALVYGDISGHTPVLARVHSECLTGDALFSLRCDCGFQLEAALTQIAEEGRGILLYHRQEGRNIGLLNKIRAYALQDQGYDTVEANHQLGFAADERDFTLCADMFKLLGVNEVRLLTNNPKKVEILTEAGINIVERVPLIVGRNPNNEHYLDTKAEKMGHLLNK</sequence>
<reference key="1">
    <citation type="submission" date="2008-02" db="EMBL/GenBank/DDBJ databases">
        <title>Complete sequence of Escherichia coli C str. ATCC 8739.</title>
        <authorList>
            <person name="Copeland A."/>
            <person name="Lucas S."/>
            <person name="Lapidus A."/>
            <person name="Glavina del Rio T."/>
            <person name="Dalin E."/>
            <person name="Tice H."/>
            <person name="Bruce D."/>
            <person name="Goodwin L."/>
            <person name="Pitluck S."/>
            <person name="Kiss H."/>
            <person name="Brettin T."/>
            <person name="Detter J.C."/>
            <person name="Han C."/>
            <person name="Kuske C.R."/>
            <person name="Schmutz J."/>
            <person name="Larimer F."/>
            <person name="Land M."/>
            <person name="Hauser L."/>
            <person name="Kyrpides N."/>
            <person name="Mikhailova N."/>
            <person name="Ingram L."/>
            <person name="Richardson P."/>
        </authorList>
    </citation>
    <scope>NUCLEOTIDE SEQUENCE [LARGE SCALE GENOMIC DNA]</scope>
    <source>
        <strain>ATCC 8739 / DSM 1576 / NBRC 3972 / NCIMB 8545 / WDCM 00012 / Crooks</strain>
    </source>
</reference>
<name>RIBA_ECOLC</name>